<reference key="1">
    <citation type="journal article" date="2006" name="Syst. Appl. Microbiol.">
        <title>Molecular characterization of the alpha-glucosidase activity in Enterobacter sakazakii reveals the presence of a putative gene cluster for palatinose metabolism.</title>
        <authorList>
            <person name="Lehner A."/>
            <person name="Riedel K."/>
            <person name="Rattei T."/>
            <person name="Ruepp A."/>
            <person name="Frishman D."/>
            <person name="Breeuwer P."/>
            <person name="Diep B."/>
            <person name="Eberl L."/>
            <person name="Stephan R."/>
        </authorList>
    </citation>
    <scope>NUCLEOTIDE SEQUENCE [GENOMIC DNA]</scope>
    <source>
        <strain>858</strain>
    </source>
</reference>
<keyword id="KW-0012">Acyltransferase</keyword>
<keyword id="KW-0998">Cell outer membrane</keyword>
<keyword id="KW-0472">Membrane</keyword>
<keyword id="KW-0732">Signal</keyword>
<keyword id="KW-0808">Transferase</keyword>
<comment type="function">
    <text evidence="1">Transfers a fatty acid residue from the sn-1 position of a phospholipid to the N-linked hydroxyfatty acid chain on the proximal unit of lipid A or its precursors.</text>
</comment>
<comment type="catalytic activity">
    <reaction evidence="1">
        <text>a lipid A + a 1,2-diacyl-sn-glycero-3-phosphocholine = a hepta-acyl lipid A + a 2-acyl-sn-glycero-3-phosphocholine</text>
        <dbReference type="Rhea" id="RHEA:74275"/>
        <dbReference type="ChEBI" id="CHEBI:57643"/>
        <dbReference type="ChEBI" id="CHEBI:57875"/>
        <dbReference type="ChEBI" id="CHEBI:193141"/>
        <dbReference type="ChEBI" id="CHEBI:193142"/>
        <dbReference type="EC" id="2.3.1.251"/>
    </reaction>
</comment>
<comment type="catalytic activity">
    <reaction evidence="1">
        <text>a lipid IVA + a 1,2-diacyl-sn-glycero-3-phosphocholine = a lipid IVB + a 2-acyl-sn-glycero-3-phosphocholine</text>
        <dbReference type="Rhea" id="RHEA:74279"/>
        <dbReference type="ChEBI" id="CHEBI:57643"/>
        <dbReference type="ChEBI" id="CHEBI:57875"/>
        <dbReference type="ChEBI" id="CHEBI:176425"/>
        <dbReference type="ChEBI" id="CHEBI:193143"/>
        <dbReference type="EC" id="2.3.1.251"/>
    </reaction>
</comment>
<comment type="catalytic activity">
    <reaction evidence="1">
        <text>a lipid IIA + a 1,2-diacyl-sn-glycero-3-phosphocholine = a lipid IIB + a 2-acyl-sn-glycero-3-phosphocholine</text>
        <dbReference type="Rhea" id="RHEA:74283"/>
        <dbReference type="ChEBI" id="CHEBI:57643"/>
        <dbReference type="ChEBI" id="CHEBI:57875"/>
        <dbReference type="ChEBI" id="CHEBI:193144"/>
        <dbReference type="ChEBI" id="CHEBI:193145"/>
        <dbReference type="EC" id="2.3.1.251"/>
    </reaction>
</comment>
<comment type="subunit">
    <text evidence="1">Homodimer.</text>
</comment>
<comment type="subcellular location">
    <subcellularLocation>
        <location evidence="1">Cell outer membrane</location>
    </subcellularLocation>
</comment>
<comment type="similarity">
    <text evidence="1">Belongs to the lipid A palmitoyltransferase family.</text>
</comment>
<protein>
    <recommendedName>
        <fullName evidence="1">Lipid A acyltransferase PagP</fullName>
        <ecNumber evidence="1">2.3.1.251</ecNumber>
    </recommendedName>
    <alternativeName>
        <fullName evidence="1">Lipid A acylation protein</fullName>
    </alternativeName>
</protein>
<organism>
    <name type="scientific">Cronobacter sakazakii</name>
    <name type="common">Enterobacter sakazakii</name>
    <dbReference type="NCBI Taxonomy" id="28141"/>
    <lineage>
        <taxon>Bacteria</taxon>
        <taxon>Pseudomonadati</taxon>
        <taxon>Pseudomonadota</taxon>
        <taxon>Gammaproteobacteria</taxon>
        <taxon>Enterobacterales</taxon>
        <taxon>Enterobacteriaceae</taxon>
        <taxon>Cronobacter</taxon>
    </lineage>
</organism>
<evidence type="ECO:0000255" key="1">
    <source>
        <dbReference type="HAMAP-Rule" id="MF_00837"/>
    </source>
</evidence>
<feature type="signal peptide" evidence="1">
    <location>
        <begin position="1"/>
        <end position="26"/>
    </location>
</feature>
<feature type="chain" id="PRO_0000414440" description="Lipid A acyltransferase PagP">
    <location>
        <begin position="27"/>
        <end position="192"/>
    </location>
</feature>
<feature type="active site" evidence="1">
    <location>
        <position position="64"/>
    </location>
</feature>
<feature type="active site" evidence="1">
    <location>
        <position position="107"/>
    </location>
</feature>
<feature type="active site" evidence="1">
    <location>
        <position position="108"/>
    </location>
</feature>
<feature type="site" description="Role in lipopolysaccharide recognition" evidence="1">
    <location>
        <position position="73"/>
    </location>
</feature>
<feature type="site" description="Role in the phospholipid gating" evidence="1">
    <location>
        <position position="178"/>
    </location>
</feature>
<gene>
    <name evidence="1" type="primary">pagP</name>
    <name type="synonym">crcA</name>
</gene>
<sequence length="192" mass="22041">MTVVNKSFLTILIFFCQILFPLNASALEAPRTVKAWASVLGDNIAETWNEPQHVDLYVPAITWHARFAYDKEKTDRYNERPWGAGMGKSRWDEKGNWHGLYVMAFKDSYNKWEPIAGYGWEATWRPLTDDAFHVGLGYTVGVTARDNWDYIPIPLVLPLASVGYGPATFQMTYIPGTYNNGNVYFAWLRLQF</sequence>
<accession>Q3ZUY0</accession>
<dbReference type="EC" id="2.3.1.251" evidence="1"/>
<dbReference type="EMBL" id="AM075208">
    <property type="protein sequence ID" value="CAJ27354.1"/>
    <property type="molecule type" value="Genomic_DNA"/>
</dbReference>
<dbReference type="RefSeq" id="WP_007865575.1">
    <property type="nucleotide sequence ID" value="NZ_CABMLV010000001.1"/>
</dbReference>
<dbReference type="SMR" id="Q3ZUY0"/>
<dbReference type="STRING" id="28141.CSK29544_03991"/>
<dbReference type="GeneID" id="56731497"/>
<dbReference type="OMA" id="FFAWLRW"/>
<dbReference type="GO" id="GO:0009279">
    <property type="term" value="C:cell outer membrane"/>
    <property type="evidence" value="ECO:0007669"/>
    <property type="project" value="UniProtKB-SubCell"/>
</dbReference>
<dbReference type="GO" id="GO:0016746">
    <property type="term" value="F:acyltransferase activity"/>
    <property type="evidence" value="ECO:0007669"/>
    <property type="project" value="UniProtKB-UniRule"/>
</dbReference>
<dbReference type="GO" id="GO:0009245">
    <property type="term" value="P:lipid A biosynthetic process"/>
    <property type="evidence" value="ECO:0007669"/>
    <property type="project" value="UniProtKB-UniRule"/>
</dbReference>
<dbReference type="FunFam" id="2.40.160.20:FF:000002">
    <property type="entry name" value="Lipid A palmitoyltransferase PagP"/>
    <property type="match status" value="1"/>
</dbReference>
<dbReference type="Gene3D" id="2.40.160.20">
    <property type="match status" value="1"/>
</dbReference>
<dbReference type="HAMAP" id="MF_00837">
    <property type="entry name" value="PagP_transferase"/>
    <property type="match status" value="1"/>
</dbReference>
<dbReference type="InterPro" id="IPR009746">
    <property type="entry name" value="LipidA_acyl_PagP"/>
</dbReference>
<dbReference type="InterPro" id="IPR011250">
    <property type="entry name" value="OMP/PagP_b-brl"/>
</dbReference>
<dbReference type="NCBIfam" id="NF008271">
    <property type="entry name" value="PRK11045.1"/>
    <property type="match status" value="1"/>
</dbReference>
<dbReference type="Pfam" id="PF07017">
    <property type="entry name" value="PagP"/>
    <property type="match status" value="1"/>
</dbReference>
<dbReference type="SUPFAM" id="SSF56925">
    <property type="entry name" value="OMPA-like"/>
    <property type="match status" value="1"/>
</dbReference>
<name>PAGP_CROSK</name>
<proteinExistence type="inferred from homology"/>